<accession>O95398</accession>
<accession>A8K2G5</accession>
<accession>E7EQC8</accession>
<accession>O95634</accession>
<accession>Q8WVN0</accession>
<organism>
    <name type="scientific">Homo sapiens</name>
    <name type="common">Human</name>
    <dbReference type="NCBI Taxonomy" id="9606"/>
    <lineage>
        <taxon>Eukaryota</taxon>
        <taxon>Metazoa</taxon>
        <taxon>Chordata</taxon>
        <taxon>Craniata</taxon>
        <taxon>Vertebrata</taxon>
        <taxon>Euteleostomi</taxon>
        <taxon>Mammalia</taxon>
        <taxon>Eutheria</taxon>
        <taxon>Euarchontoglires</taxon>
        <taxon>Primates</taxon>
        <taxon>Haplorrhini</taxon>
        <taxon>Catarrhini</taxon>
        <taxon>Hominidae</taxon>
        <taxon>Homo</taxon>
    </lineage>
</organism>
<sequence length="923" mass="103751">MKVGWPGESCWQVGLAVEDSPALGAPRVGALPDVVPEGTLLNMVLRRMHRPRSCSYQLLLEHQRPSCIQGLRWTPLTNSEESLDFSESLEQASTERVLRAGRQLHRHLLATCPNLIRDRKYHLRLYRQCCSGRELVDGILALGLGVHSRSQVVGICQVLLDEGALCHVKHDWAFQDRDAQFYRFPGPEPEPVRTHEMEEELAEAVALLSQRGPDALLTVALRKPPGQRTDEELDLIFEELLHIKAVAHLSNSVKRELAAVLLFEPHSKAGTVLFSQGDKGTSWYIIWKGSVNVVTHGKGLVTTLHEGDDFGQLALVNDAPRAATIILREDNCHFLRVDKQDFNRIIKDVEAKTMRLEEHGKVVLVLERASQGAGPSRPPTPGRNRYTVMSGTPEKILELLLEAMGPDSSAHDPTETFLSDFLLTHRVFMPSAQLCAALLHHFHVEPAGGSEQERSTYVCNKRQQILRLVSQWVALYGSMLHTDPVATSFLQKLSDLVGRDTRLSNLLREQWPERRRCHRLENGCGNASPQMKARNLPVWLPNQDEPLPGSSCAIQVGDKVPYDICRPDHSVLTLQLPVTASVREVMAALAQEDGWTKGQVLVKVNSAGDAIGLQPDARGVATSLGLNERLFVVNPQEVHELIPHPDQLGPTVGSAEGLDLVSAKDLAGQLTDHDWSLFNSIHQVELIHYVLGPQHLRDVTTANLERFMRRFNELQYWVATELCLCPVPGPRAQLLRKFIKLAAHLKEQKNLNSFFAVMFGLSNSAISRLAHTWERLPHKVRKLYSALERLLDPSWNHRVYRLALAKLSPPVIPFMPLLLKDMTFIHEGNHTLVENLINFEKMRMMARAARMLHHCRSHNPVPLSPLRSRVSHLHEDSQVARISTCSEQSLSTRSPASTWAYVQQLKVIDNQRELSRLSRELEP</sequence>
<name>RPGF3_HUMAN</name>
<proteinExistence type="evidence at protein level"/>
<reference key="1">
    <citation type="journal article" date="1998" name="Science">
        <title>A family of cAMP-binding proteins that directly activate rap1.</title>
        <authorList>
            <person name="Kawasaki H."/>
            <person name="Springett G.M."/>
            <person name="Mochizuki N."/>
            <person name="Toki S."/>
            <person name="Nakaya M."/>
            <person name="Matsuda M."/>
            <person name="Housman D.E."/>
            <person name="Graybiel A.M."/>
        </authorList>
    </citation>
    <scope>NUCLEOTIDE SEQUENCE [MRNA] (ISOFORMS 1 AND 2)</scope>
    <scope>TISSUE SPECIFICITY</scope>
    <scope>MUTAGENESIS OF ARG-321</scope>
    <scope>VARIANT GLY-193</scope>
</reference>
<reference key="2">
    <citation type="journal article" date="2004" name="Nat. Genet.">
        <title>Complete sequencing and characterization of 21,243 full-length human cDNAs.</title>
        <authorList>
            <person name="Ota T."/>
            <person name="Suzuki Y."/>
            <person name="Nishikawa T."/>
            <person name="Otsuki T."/>
            <person name="Sugiyama T."/>
            <person name="Irie R."/>
            <person name="Wakamatsu A."/>
            <person name="Hayashi K."/>
            <person name="Sato H."/>
            <person name="Nagai K."/>
            <person name="Kimura K."/>
            <person name="Makita H."/>
            <person name="Sekine M."/>
            <person name="Obayashi M."/>
            <person name="Nishi T."/>
            <person name="Shibahara T."/>
            <person name="Tanaka T."/>
            <person name="Ishii S."/>
            <person name="Yamamoto J."/>
            <person name="Saito K."/>
            <person name="Kawai Y."/>
            <person name="Isono Y."/>
            <person name="Nakamura Y."/>
            <person name="Nagahari K."/>
            <person name="Murakami K."/>
            <person name="Yasuda T."/>
            <person name="Iwayanagi T."/>
            <person name="Wagatsuma M."/>
            <person name="Shiratori A."/>
            <person name="Sudo H."/>
            <person name="Hosoiri T."/>
            <person name="Kaku Y."/>
            <person name="Kodaira H."/>
            <person name="Kondo H."/>
            <person name="Sugawara M."/>
            <person name="Takahashi M."/>
            <person name="Kanda K."/>
            <person name="Yokoi T."/>
            <person name="Furuya T."/>
            <person name="Kikkawa E."/>
            <person name="Omura Y."/>
            <person name="Abe K."/>
            <person name="Kamihara K."/>
            <person name="Katsuta N."/>
            <person name="Sato K."/>
            <person name="Tanikawa M."/>
            <person name="Yamazaki M."/>
            <person name="Ninomiya K."/>
            <person name="Ishibashi T."/>
            <person name="Yamashita H."/>
            <person name="Murakawa K."/>
            <person name="Fujimori K."/>
            <person name="Tanai H."/>
            <person name="Kimata M."/>
            <person name="Watanabe M."/>
            <person name="Hiraoka S."/>
            <person name="Chiba Y."/>
            <person name="Ishida S."/>
            <person name="Ono Y."/>
            <person name="Takiguchi S."/>
            <person name="Watanabe S."/>
            <person name="Yosida M."/>
            <person name="Hotuta T."/>
            <person name="Kusano J."/>
            <person name="Kanehori K."/>
            <person name="Takahashi-Fujii A."/>
            <person name="Hara H."/>
            <person name="Tanase T.-O."/>
            <person name="Nomura Y."/>
            <person name="Togiya S."/>
            <person name="Komai F."/>
            <person name="Hara R."/>
            <person name="Takeuchi K."/>
            <person name="Arita M."/>
            <person name="Imose N."/>
            <person name="Musashino K."/>
            <person name="Yuuki H."/>
            <person name="Oshima A."/>
            <person name="Sasaki N."/>
            <person name="Aotsuka S."/>
            <person name="Yoshikawa Y."/>
            <person name="Matsunawa H."/>
            <person name="Ichihara T."/>
            <person name="Shiohata N."/>
            <person name="Sano S."/>
            <person name="Moriya S."/>
            <person name="Momiyama H."/>
            <person name="Satoh N."/>
            <person name="Takami S."/>
            <person name="Terashima Y."/>
            <person name="Suzuki O."/>
            <person name="Nakagawa S."/>
            <person name="Senoh A."/>
            <person name="Mizoguchi H."/>
            <person name="Goto Y."/>
            <person name="Shimizu F."/>
            <person name="Wakebe H."/>
            <person name="Hishigaki H."/>
            <person name="Watanabe T."/>
            <person name="Sugiyama A."/>
            <person name="Takemoto M."/>
            <person name="Kawakami B."/>
            <person name="Yamazaki M."/>
            <person name="Watanabe K."/>
            <person name="Kumagai A."/>
            <person name="Itakura S."/>
            <person name="Fukuzumi Y."/>
            <person name="Fujimori Y."/>
            <person name="Komiyama M."/>
            <person name="Tashiro H."/>
            <person name="Tanigami A."/>
            <person name="Fujiwara T."/>
            <person name="Ono T."/>
            <person name="Yamada K."/>
            <person name="Fujii Y."/>
            <person name="Ozaki K."/>
            <person name="Hirao M."/>
            <person name="Ohmori Y."/>
            <person name="Kawabata A."/>
            <person name="Hikiji T."/>
            <person name="Kobatake N."/>
            <person name="Inagaki H."/>
            <person name="Ikema Y."/>
            <person name="Okamoto S."/>
            <person name="Okitani R."/>
            <person name="Kawakami T."/>
            <person name="Noguchi S."/>
            <person name="Itoh T."/>
            <person name="Shigeta K."/>
            <person name="Senba T."/>
            <person name="Matsumura K."/>
            <person name="Nakajima Y."/>
            <person name="Mizuno T."/>
            <person name="Morinaga M."/>
            <person name="Sasaki M."/>
            <person name="Togashi T."/>
            <person name="Oyama M."/>
            <person name="Hata H."/>
            <person name="Watanabe M."/>
            <person name="Komatsu T."/>
            <person name="Mizushima-Sugano J."/>
            <person name="Satoh T."/>
            <person name="Shirai Y."/>
            <person name="Takahashi Y."/>
            <person name="Nakagawa K."/>
            <person name="Okumura K."/>
            <person name="Nagase T."/>
            <person name="Nomura N."/>
            <person name="Kikuchi H."/>
            <person name="Masuho Y."/>
            <person name="Yamashita R."/>
            <person name="Nakai K."/>
            <person name="Yada T."/>
            <person name="Nakamura Y."/>
            <person name="Ohara O."/>
            <person name="Isogai T."/>
            <person name="Sugano S."/>
        </authorList>
    </citation>
    <scope>NUCLEOTIDE SEQUENCE [LARGE SCALE MRNA] (ISOFORM 3)</scope>
    <scope>VARIANT GLY-193</scope>
    <source>
        <tissue>Thalamus</tissue>
    </source>
</reference>
<reference key="3">
    <citation type="journal article" date="2006" name="Nature">
        <title>The finished DNA sequence of human chromosome 12.</title>
        <authorList>
            <person name="Scherer S.E."/>
            <person name="Muzny D.M."/>
            <person name="Buhay C.J."/>
            <person name="Chen R."/>
            <person name="Cree A."/>
            <person name="Ding Y."/>
            <person name="Dugan-Rocha S."/>
            <person name="Gill R."/>
            <person name="Gunaratne P."/>
            <person name="Harris R.A."/>
            <person name="Hawes A.C."/>
            <person name="Hernandez J."/>
            <person name="Hodgson A.V."/>
            <person name="Hume J."/>
            <person name="Jackson A."/>
            <person name="Khan Z.M."/>
            <person name="Kovar-Smith C."/>
            <person name="Lewis L.R."/>
            <person name="Lozado R.J."/>
            <person name="Metzker M.L."/>
            <person name="Milosavljevic A."/>
            <person name="Miner G.R."/>
            <person name="Montgomery K.T."/>
            <person name="Morgan M.B."/>
            <person name="Nazareth L.V."/>
            <person name="Scott G."/>
            <person name="Sodergren E."/>
            <person name="Song X.-Z."/>
            <person name="Steffen D."/>
            <person name="Lovering R.C."/>
            <person name="Wheeler D.A."/>
            <person name="Worley K.C."/>
            <person name="Yuan Y."/>
            <person name="Zhang Z."/>
            <person name="Adams C.Q."/>
            <person name="Ansari-Lari M.A."/>
            <person name="Ayele M."/>
            <person name="Brown M.J."/>
            <person name="Chen G."/>
            <person name="Chen Z."/>
            <person name="Clerc-Blankenburg K.P."/>
            <person name="Davis C."/>
            <person name="Delgado O."/>
            <person name="Dinh H.H."/>
            <person name="Draper H."/>
            <person name="Gonzalez-Garay M.L."/>
            <person name="Havlak P."/>
            <person name="Jackson L.R."/>
            <person name="Jacob L.S."/>
            <person name="Kelly S.H."/>
            <person name="Li L."/>
            <person name="Li Z."/>
            <person name="Liu J."/>
            <person name="Liu W."/>
            <person name="Lu J."/>
            <person name="Maheshwari M."/>
            <person name="Nguyen B.-V."/>
            <person name="Okwuonu G.O."/>
            <person name="Pasternak S."/>
            <person name="Perez L.M."/>
            <person name="Plopper F.J.H."/>
            <person name="Santibanez J."/>
            <person name="Shen H."/>
            <person name="Tabor P.E."/>
            <person name="Verduzco D."/>
            <person name="Waldron L."/>
            <person name="Wang Q."/>
            <person name="Williams G.A."/>
            <person name="Zhang J."/>
            <person name="Zhou J."/>
            <person name="Allen C.C."/>
            <person name="Amin A.G."/>
            <person name="Anyalebechi V."/>
            <person name="Bailey M."/>
            <person name="Barbaria J.A."/>
            <person name="Bimage K.E."/>
            <person name="Bryant N.P."/>
            <person name="Burch P.E."/>
            <person name="Burkett C.E."/>
            <person name="Burrell K.L."/>
            <person name="Calderon E."/>
            <person name="Cardenas V."/>
            <person name="Carter K."/>
            <person name="Casias K."/>
            <person name="Cavazos I."/>
            <person name="Cavazos S.R."/>
            <person name="Ceasar H."/>
            <person name="Chacko J."/>
            <person name="Chan S.N."/>
            <person name="Chavez D."/>
            <person name="Christopoulos C."/>
            <person name="Chu J."/>
            <person name="Cockrell R."/>
            <person name="Cox C.D."/>
            <person name="Dang M."/>
            <person name="Dathorne S.R."/>
            <person name="David R."/>
            <person name="Davis C.M."/>
            <person name="Davy-Carroll L."/>
            <person name="Deshazo D.R."/>
            <person name="Donlin J.E."/>
            <person name="D'Souza L."/>
            <person name="Eaves K.A."/>
            <person name="Egan A."/>
            <person name="Emery-Cohen A.J."/>
            <person name="Escotto M."/>
            <person name="Flagg N."/>
            <person name="Forbes L.D."/>
            <person name="Gabisi A.M."/>
            <person name="Garza M."/>
            <person name="Hamilton C."/>
            <person name="Henderson N."/>
            <person name="Hernandez O."/>
            <person name="Hines S."/>
            <person name="Hogues M.E."/>
            <person name="Huang M."/>
            <person name="Idlebird D.G."/>
            <person name="Johnson R."/>
            <person name="Jolivet A."/>
            <person name="Jones S."/>
            <person name="Kagan R."/>
            <person name="King L.M."/>
            <person name="Leal B."/>
            <person name="Lebow H."/>
            <person name="Lee S."/>
            <person name="LeVan J.M."/>
            <person name="Lewis L.C."/>
            <person name="London P."/>
            <person name="Lorensuhewa L.M."/>
            <person name="Loulseged H."/>
            <person name="Lovett D.A."/>
            <person name="Lucier A."/>
            <person name="Lucier R.L."/>
            <person name="Ma J."/>
            <person name="Madu R.C."/>
            <person name="Mapua P."/>
            <person name="Martindale A.D."/>
            <person name="Martinez E."/>
            <person name="Massey E."/>
            <person name="Mawhiney S."/>
            <person name="Meador M.G."/>
            <person name="Mendez S."/>
            <person name="Mercado C."/>
            <person name="Mercado I.C."/>
            <person name="Merritt C.E."/>
            <person name="Miner Z.L."/>
            <person name="Minja E."/>
            <person name="Mitchell T."/>
            <person name="Mohabbat F."/>
            <person name="Mohabbat K."/>
            <person name="Montgomery B."/>
            <person name="Moore N."/>
            <person name="Morris S."/>
            <person name="Munidasa M."/>
            <person name="Ngo R.N."/>
            <person name="Nguyen N.B."/>
            <person name="Nickerson E."/>
            <person name="Nwaokelemeh O.O."/>
            <person name="Nwokenkwo S."/>
            <person name="Obregon M."/>
            <person name="Oguh M."/>
            <person name="Oragunye N."/>
            <person name="Oviedo R.J."/>
            <person name="Parish B.J."/>
            <person name="Parker D.N."/>
            <person name="Parrish J."/>
            <person name="Parks K.L."/>
            <person name="Paul H.A."/>
            <person name="Payton B.A."/>
            <person name="Perez A."/>
            <person name="Perrin W."/>
            <person name="Pickens A."/>
            <person name="Primus E.L."/>
            <person name="Pu L.-L."/>
            <person name="Puazo M."/>
            <person name="Quiles M.M."/>
            <person name="Quiroz J.B."/>
            <person name="Rabata D."/>
            <person name="Reeves K."/>
            <person name="Ruiz S.J."/>
            <person name="Shao H."/>
            <person name="Sisson I."/>
            <person name="Sonaike T."/>
            <person name="Sorelle R.P."/>
            <person name="Sutton A.E."/>
            <person name="Svatek A.F."/>
            <person name="Svetz L.A."/>
            <person name="Tamerisa K.S."/>
            <person name="Taylor T.R."/>
            <person name="Teague B."/>
            <person name="Thomas N."/>
            <person name="Thorn R.D."/>
            <person name="Trejos Z.Y."/>
            <person name="Trevino B.K."/>
            <person name="Ukegbu O.N."/>
            <person name="Urban J.B."/>
            <person name="Vasquez L.I."/>
            <person name="Vera V.A."/>
            <person name="Villasana D.M."/>
            <person name="Wang L."/>
            <person name="Ward-Moore S."/>
            <person name="Warren J.T."/>
            <person name="Wei X."/>
            <person name="White F."/>
            <person name="Williamson A.L."/>
            <person name="Wleczyk R."/>
            <person name="Wooden H.S."/>
            <person name="Wooden S.H."/>
            <person name="Yen J."/>
            <person name="Yoon L."/>
            <person name="Yoon V."/>
            <person name="Zorrilla S.E."/>
            <person name="Nelson D."/>
            <person name="Kucherlapati R."/>
            <person name="Weinstock G."/>
            <person name="Gibbs R.A."/>
        </authorList>
    </citation>
    <scope>NUCLEOTIDE SEQUENCE [LARGE SCALE GENOMIC DNA]</scope>
</reference>
<reference key="4">
    <citation type="submission" date="2005-07" db="EMBL/GenBank/DDBJ databases">
        <authorList>
            <person name="Mural R.J."/>
            <person name="Istrail S."/>
            <person name="Sutton G.G."/>
            <person name="Florea L."/>
            <person name="Halpern A.L."/>
            <person name="Mobarry C.M."/>
            <person name="Lippert R."/>
            <person name="Walenz B."/>
            <person name="Shatkay H."/>
            <person name="Dew I."/>
            <person name="Miller J.R."/>
            <person name="Flanigan M.J."/>
            <person name="Edwards N.J."/>
            <person name="Bolanos R."/>
            <person name="Fasulo D."/>
            <person name="Halldorsson B.V."/>
            <person name="Hannenhalli S."/>
            <person name="Turner R."/>
            <person name="Yooseph S."/>
            <person name="Lu F."/>
            <person name="Nusskern D.R."/>
            <person name="Shue B.C."/>
            <person name="Zheng X.H."/>
            <person name="Zhong F."/>
            <person name="Delcher A.L."/>
            <person name="Huson D.H."/>
            <person name="Kravitz S.A."/>
            <person name="Mouchard L."/>
            <person name="Reinert K."/>
            <person name="Remington K.A."/>
            <person name="Clark A.G."/>
            <person name="Waterman M.S."/>
            <person name="Eichler E.E."/>
            <person name="Adams M.D."/>
            <person name="Hunkapiller M.W."/>
            <person name="Myers E.W."/>
            <person name="Venter J.C."/>
        </authorList>
    </citation>
    <scope>NUCLEOTIDE SEQUENCE [LARGE SCALE GENOMIC DNA]</scope>
    <scope>VARIANT GLY-193</scope>
</reference>
<reference key="5">
    <citation type="journal article" date="2004" name="Genome Res.">
        <title>The status, quality, and expansion of the NIH full-length cDNA project: the Mammalian Gene Collection (MGC).</title>
        <authorList>
            <consortium name="The MGC Project Team"/>
        </authorList>
    </citation>
    <scope>NUCLEOTIDE SEQUENCE [LARGE SCALE MRNA] (ISOFORM 1)</scope>
    <scope>VARIANTS PRO-16 AND GLY-193</scope>
    <source>
        <tissue>Kidney</tissue>
    </source>
</reference>
<reference key="6">
    <citation type="journal article" date="1998" name="Nature">
        <title>Epac is a Rap1 guanine-nucleotide-exchange factor directly activated by cyclic AMP.</title>
        <authorList>
            <person name="de Rooij J."/>
            <person name="Zwartkruis F.J.T."/>
            <person name="Verheijen M.H."/>
            <person name="Cool R.H."/>
            <person name="Nijman S.M."/>
            <person name="Wittinghofer A."/>
            <person name="Bos J.L."/>
        </authorList>
    </citation>
    <scope>NUCLEOTIDE SEQUENCE [MRNA] OF 43-923 (ISOFORM 1)</scope>
    <scope>FUNCTION</scope>
    <scope>VARIANT GLY-193</scope>
    <source>
        <tissue>Muscle</tissue>
    </source>
</reference>
<reference key="7">
    <citation type="journal article" date="2000" name="J. Biol. Chem.">
        <title>Mechanism of regulation of the Epac family of cAMP-dependent RapGEFs.</title>
        <authorList>
            <person name="de Rooij J."/>
            <person name="Rehmann H."/>
            <person name="van Triest M."/>
            <person name="Cool R.H."/>
            <person name="Wittinghofer A."/>
            <person name="Bos J.L."/>
        </authorList>
    </citation>
    <scope>FUNCTION</scope>
    <scope>DOMAIN DEP</scope>
    <scope>SUBCELLULAR LOCATION</scope>
</reference>
<reference key="8">
    <citation type="journal article" date="2003" name="Nat. Struct. Biol.">
        <title>Structure and regulation of the cAMP-binding domains of Epac2.</title>
        <authorList>
            <person name="Rehmann H."/>
            <person name="Prakash B."/>
            <person name="Wolf E."/>
            <person name="Rueppel A."/>
            <person name="De Rooij J."/>
            <person name="Bos J.L."/>
            <person name="Wittinghofer A."/>
        </authorList>
    </citation>
    <scope>MUTAGENESIS OF LEU-315 AND PHE-342</scope>
</reference>
<reference key="9">
    <citation type="journal article" date="2011" name="Cell. Signal.">
        <title>Epac1 and PDZ-GEF cooperate in Rap1 mediated endothelial junction control.</title>
        <authorList>
            <person name="Pannekoek W.J."/>
            <person name="van Dijk J.J."/>
            <person name="Chan O.Y."/>
            <person name="Huveneers S."/>
            <person name="Linnemann J.R."/>
            <person name="Spanjaard E."/>
            <person name="Brouwer P.M."/>
            <person name="van der Meer A.J."/>
            <person name="Zwartkruis F.J."/>
            <person name="Rehmann H."/>
            <person name="de Rooij J."/>
            <person name="Bos J.L."/>
        </authorList>
    </citation>
    <scope>FUNCTION</scope>
</reference>
<reference key="10">
    <citation type="journal article" date="2011" name="J. Biol. Chem.">
        <title>A phosphodiesterase 3B-based signaling complex integrates exchange protein activated by cAMP 1 and phosphatidylinositol 3-kinase signals in human arterial endothelial cells.</title>
        <authorList>
            <person name="Wilson L.S."/>
            <person name="Baillie G.S."/>
            <person name="Pritchard L.M."/>
            <person name="Umana B."/>
            <person name="Terrin A."/>
            <person name="Zaccolo M."/>
            <person name="Houslay M.D."/>
            <person name="Maurice D.H."/>
        </authorList>
    </citation>
    <scope>INTERACTION WITH PDE3B AND PIK3R6</scope>
    <scope>MUTAGENESIS OF ASP-412; GLU-415; PHE-417; ASP-420 AND PHE-421</scope>
</reference>
<reference evidence="17" key="11">
    <citation type="submission" date="2018-07" db="PDB data bank">
        <title>GEF regulatory domain.</title>
        <authorList>
            <person name="Ferrandez Y."/>
            <person name="Cherfils J."/>
            <person name="Peurois F."/>
        </authorList>
    </citation>
    <scope>X-RAY CRYSTALLOGRAPHY (2.30 ANGSTROMS) OF 92-360 IN COMPLEX WITH CAMP</scope>
</reference>
<gene>
    <name type="primary">RAPGEF3</name>
    <name type="synonym">CGEF1</name>
    <name type="synonym">EPAC</name>
    <name type="synonym">EPAC1</name>
</gene>
<comment type="function">
    <text evidence="5 10 11">Guanine nucleotide exchange factor (GEF) for RAP1A and RAP2A small GTPases that is activated by binding cAMP. Through simultaneous binding of PDE3B to RAPGEF3 and PIK3R6 is assembled in a signaling complex in which it activates the PI3K gamma complex and which is involved in angiogenesis. Plays a role in the modulation of the cAMP-induced dynamic control of endothelial barrier function through a pathway that is independent on Rho-mediated signaling. Required for the actin rearrangement at cell-cell junctions, such as stress fibers and junctional actin.</text>
</comment>
<comment type="subunit">
    <text evidence="9">Interacts with PDE3B and PIK3R6; form a signaling complex that regulates phosphatidylinositol 3-kinase gamma in angiogenesis.</text>
</comment>
<comment type="interaction">
    <interactant intactId="EBI-6172806">
        <id>O95398</id>
    </interactant>
    <interactant intactId="EBI-6172856">
        <id>Q13370</id>
        <label>PDE3B</label>
    </interactant>
    <organismsDiffer>false</organismsDiffer>
    <experiments>8</experiments>
</comment>
<comment type="subcellular location">
    <subcellularLocation>
        <location evidence="5">Endomembrane system</location>
    </subcellularLocation>
</comment>
<comment type="alternative products">
    <event type="alternative splicing"/>
    <isoform>
        <id>O95398-1</id>
        <name>1</name>
        <sequence type="displayed"/>
    </isoform>
    <isoform>
        <id>O95398-2</id>
        <name>2</name>
        <sequence type="described" ref="VSP_007608 VSP_007609"/>
    </isoform>
    <isoform>
        <id>O95398-3</id>
        <name>3</name>
        <sequence type="described" ref="VSP_047007"/>
    </isoform>
</comment>
<comment type="tissue specificity">
    <text evidence="12">Widely expressed with highest levels in adult kidney, heart, thyroid and brain, and fetal kidney.</text>
</comment>
<comment type="domain">
    <text evidence="5">The DEP domain is involved in membrane localization independent from regulation by cAMP.</text>
</comment>
<comment type="caution">
    <text evidence="16">It is uncertain whether Met-1 or Met-43 is the initiator.</text>
</comment>
<comment type="sequence caution" evidence="16">
    <conflict type="erroneous initiation">
        <sequence resource="EMBL-CDS" id="AAD02890"/>
    </conflict>
    <text>Truncated N-terminus.</text>
</comment>
<comment type="sequence caution" evidence="16">
    <conflict type="erroneous initiation">
        <sequence resource="EMBL-CDS" id="AAD12740"/>
    </conflict>
    <text>Truncated N-terminus.</text>
</comment>
<protein>
    <recommendedName>
        <fullName>Rap guanine nucleotide exchange factor 3</fullName>
    </recommendedName>
    <alternativeName>
        <fullName>Exchange factor directly activated by cAMP 1</fullName>
    </alternativeName>
    <alternativeName>
        <fullName>Exchange protein directly activated by cAMP 1</fullName>
        <shortName>EPAC 1</shortName>
    </alternativeName>
    <alternativeName>
        <fullName>Rap1 guanine-nucleotide-exchange factor directly activated by cAMP</fullName>
    </alternativeName>
    <alternativeName>
        <fullName>cAMP-regulated guanine nucleotide exchange factor I</fullName>
        <shortName>cAMP-GEFI</shortName>
    </alternativeName>
</protein>
<evidence type="ECO:0000250" key="1">
    <source>
        <dbReference type="UniProtKB" id="Q8VCC8"/>
    </source>
</evidence>
<evidence type="ECO:0000255" key="2">
    <source>
        <dbReference type="PROSITE-ProRule" id="PRU00066"/>
    </source>
</evidence>
<evidence type="ECO:0000255" key="3">
    <source>
        <dbReference type="PROSITE-ProRule" id="PRU00135"/>
    </source>
</evidence>
<evidence type="ECO:0000255" key="4">
    <source>
        <dbReference type="PROSITE-ProRule" id="PRU00168"/>
    </source>
</evidence>
<evidence type="ECO:0000269" key="5">
    <source>
    </source>
</evidence>
<evidence type="ECO:0000269" key="6">
    <source>
    </source>
</evidence>
<evidence type="ECO:0000269" key="7">
    <source>
    </source>
</evidence>
<evidence type="ECO:0000269" key="8">
    <source>
    </source>
</evidence>
<evidence type="ECO:0000269" key="9">
    <source>
    </source>
</evidence>
<evidence type="ECO:0000269" key="10">
    <source>
    </source>
</evidence>
<evidence type="ECO:0000269" key="11">
    <source>
    </source>
</evidence>
<evidence type="ECO:0000269" key="12">
    <source>
    </source>
</evidence>
<evidence type="ECO:0000269" key="13">
    <source ref="4"/>
</evidence>
<evidence type="ECO:0000303" key="14">
    <source>
    </source>
</evidence>
<evidence type="ECO:0000303" key="15">
    <source>
    </source>
</evidence>
<evidence type="ECO:0000305" key="16"/>
<evidence type="ECO:0007744" key="17">
    <source>
        <dbReference type="PDB" id="6H7E"/>
    </source>
</evidence>
<evidence type="ECO:0007829" key="18">
    <source>
        <dbReference type="PDB" id="6H7E"/>
    </source>
</evidence>
<feature type="chain" id="PRO_0000068867" description="Rap guanine nucleotide exchange factor 3">
    <location>
        <begin position="1"/>
        <end position="923"/>
    </location>
</feature>
<feature type="domain" description="DEP" evidence="2">
    <location>
        <begin position="110"/>
        <end position="186"/>
    </location>
</feature>
<feature type="domain" description="N-terminal Ras-GEF" evidence="3">
    <location>
        <begin position="384"/>
        <end position="518"/>
    </location>
</feature>
<feature type="domain" description="Ras-GEF" evidence="4">
    <location>
        <begin position="662"/>
        <end position="889"/>
    </location>
</feature>
<feature type="region of interest" description="Interaction with PDE3B" evidence="9">
    <location>
        <begin position="218"/>
        <end position="242"/>
    </location>
</feature>
<feature type="region of interest" description="Interaction with PDE3B" evidence="9">
    <location>
        <begin position="398"/>
        <end position="422"/>
    </location>
</feature>
<feature type="binding site" evidence="17">
    <location>
        <begin position="311"/>
        <end position="314"/>
    </location>
    <ligand>
        <name>3',5'-cyclic AMP</name>
        <dbReference type="ChEBI" id="CHEBI:58165"/>
    </ligand>
</feature>
<feature type="binding site" evidence="17">
    <location>
        <begin position="321"/>
        <end position="322"/>
    </location>
    <ligand>
        <name>3',5'-cyclic AMP</name>
        <dbReference type="ChEBI" id="CHEBI:58165"/>
    </ligand>
</feature>
<feature type="modified residue" description="Phosphoserine" evidence="1">
    <location>
        <position position="79"/>
    </location>
</feature>
<feature type="modified residue" description="Phosphoserine" evidence="1">
    <location>
        <position position="528"/>
    </location>
</feature>
<feature type="modified residue" description="Phosphoserine" evidence="1">
    <location>
        <position position="864"/>
    </location>
</feature>
<feature type="splice variant" id="VSP_047007" description="In isoform 3." evidence="14">
    <location>
        <begin position="1"/>
        <end position="42"/>
    </location>
</feature>
<feature type="splice variant" id="VSP_007608" description="In isoform 2." evidence="15">
    <original>ARNLPVWLPNQDEPLPGSSCAIQVGDKVPYDICRPDHSVLTLQLPVTASVREVMAALAQEDGWTKG</original>
    <variation>VSAWPQFLSSAPPGLQAPPSPPDPEGLCGRGKLSSHRHTLGSLIGVHGALAACGALGQAVPGGAEA</variation>
    <location>
        <begin position="533"/>
        <end position="598"/>
    </location>
</feature>
<feature type="splice variant" id="VSP_007609" description="In isoform 2." evidence="15">
    <location>
        <begin position="599"/>
        <end position="923"/>
    </location>
</feature>
<feature type="sequence variant" id="VAR_047924" description="In dbSNP:rs11168230." evidence="8">
    <original>A</original>
    <variation>P</variation>
    <location>
        <position position="16"/>
    </location>
</feature>
<feature type="sequence variant" id="VAR_047925" description="In dbSNP:rs2016123." evidence="7 8 11 12 13">
    <original>R</original>
    <variation>G</variation>
    <location>
        <position position="193"/>
    </location>
</feature>
<feature type="sequence variant" id="VAR_047926" description="In dbSNP:rs12422983.">
    <original>G</original>
    <variation>S</variation>
    <location>
        <position position="374"/>
    </location>
</feature>
<feature type="sequence variant" id="VAR_061784" description="In dbSNP:rs61709815.">
    <original>C</original>
    <variation>Y</variation>
    <location>
        <position position="517"/>
    </location>
</feature>
<feature type="mutagenesis site" description="Abolishes activation of RAP1A." evidence="6">
    <original>L</original>
    <variation>W</variation>
    <location>
        <position position="315"/>
    </location>
</feature>
<feature type="mutagenesis site" description="Reduces activation of RAP1A." evidence="12">
    <original>R</original>
    <variation>K</variation>
    <location>
        <position position="321"/>
    </location>
</feature>
<feature type="mutagenesis site" description="Diminishes GEF activity dependence on cAMP concentration." evidence="6">
    <original>F</original>
    <variation>A</variation>
    <variation>T</variation>
    <location>
        <position position="342"/>
    </location>
</feature>
<feature type="mutagenesis site" description="Abolishes interaction with PDE3B." evidence="9">
    <original>D</original>
    <variation>A</variation>
    <location>
        <position position="412"/>
    </location>
</feature>
<feature type="mutagenesis site" description="Abolishes interaction with PDE3B." evidence="9">
    <original>E</original>
    <variation>A</variation>
    <location>
        <position position="415"/>
    </location>
</feature>
<feature type="mutagenesis site" description="Abolishes interaction with PDE3B." evidence="9">
    <original>F</original>
    <variation>A</variation>
    <location>
        <position position="417"/>
    </location>
</feature>
<feature type="mutagenesis site" description="Abolishes interaction with PDE3B." evidence="9">
    <original>D</original>
    <variation>A</variation>
    <location>
        <position position="420"/>
    </location>
</feature>
<feature type="mutagenesis site" description="Abolishes interaction with PDE3B." evidence="9">
    <original>F</original>
    <variation>A</variation>
    <location>
        <position position="421"/>
    </location>
</feature>
<feature type="sequence conflict" description="In Ref. 1; AAD12740/AAD02890." evidence="16" ref="1">
    <original>R</original>
    <variation>H</variation>
    <location>
        <position position="64"/>
    </location>
</feature>
<feature type="sequence conflict" description="In Ref. 1; AAD12740/AAD02890." evidence="16" ref="1">
    <original>R</original>
    <variation>Q</variation>
    <location>
        <position position="106"/>
    </location>
</feature>
<feature type="sequence conflict" description="In Ref. 6; AAC83381." evidence="16" ref="6">
    <original>I</original>
    <variation>T</variation>
    <location>
        <position position="116"/>
    </location>
</feature>
<feature type="sequence conflict" description="In Ref. 1; AAD12740/AAD02890." evidence="16" ref="1">
    <original>D</original>
    <variation>Y</variation>
    <location>
        <position position="330"/>
    </location>
</feature>
<feature type="sequence conflict" description="In Ref. 1; AAD12740/AAD02890." evidence="16" ref="1">
    <original>E</original>
    <variation>D</variation>
    <location>
        <position position="394"/>
    </location>
</feature>
<feature type="sequence conflict" description="In Ref. 1; AAD12740/AAD02890." evidence="16" ref="1">
    <original>P</original>
    <variation>L</variation>
    <location>
        <position position="406"/>
    </location>
</feature>
<feature type="sequence conflict" description="In Ref. 1; AAD12740/AAD02890." evidence="16" ref="1">
    <original>T</original>
    <variation>K</variation>
    <location>
        <position position="414"/>
    </location>
</feature>
<feature type="sequence conflict" description="In Ref. 1; AAD12740." evidence="16" ref="1">
    <original>Q</original>
    <variation>H</variation>
    <location>
        <position position="491"/>
    </location>
</feature>
<feature type="sequence conflict" description="In Ref. 6; AAC83381." evidence="16" ref="6">
    <original>V</original>
    <variation>A</variation>
    <location>
        <position position="638"/>
    </location>
</feature>
<feature type="sequence conflict" description="In Ref. 1; AAD12740." evidence="16" ref="1">
    <original>R</original>
    <variation>K</variation>
    <location>
        <position position="736"/>
    </location>
</feature>
<feature type="sequence conflict" description="In Ref. 1; AAD12740." evidence="16" ref="1">
    <original>L</original>
    <variation>V</variation>
    <location>
        <position position="751"/>
    </location>
</feature>
<feature type="sequence conflict" description="In Ref. 1; AAD12740." evidence="16" ref="1">
    <original>A</original>
    <variation>P</variation>
    <location>
        <position position="765"/>
    </location>
</feature>
<feature type="helix" evidence="18">
    <location>
        <begin position="94"/>
        <end position="111"/>
    </location>
</feature>
<feature type="strand" evidence="18">
    <location>
        <begin position="115"/>
        <end position="121"/>
    </location>
</feature>
<feature type="strand" evidence="18">
    <location>
        <begin position="124"/>
        <end position="131"/>
    </location>
</feature>
<feature type="helix" evidence="18">
    <location>
        <begin position="132"/>
        <end position="142"/>
    </location>
</feature>
<feature type="helix" evidence="18">
    <location>
        <begin position="149"/>
        <end position="161"/>
    </location>
</feature>
<feature type="strand" evidence="18">
    <location>
        <begin position="164"/>
        <end position="167"/>
    </location>
</feature>
<feature type="strand" evidence="18">
    <location>
        <begin position="177"/>
        <end position="179"/>
    </location>
</feature>
<feature type="strand" evidence="18">
    <location>
        <begin position="181"/>
        <end position="183"/>
    </location>
</feature>
<feature type="helix" evidence="18">
    <location>
        <begin position="200"/>
        <end position="222"/>
    </location>
</feature>
<feature type="helix" evidence="18">
    <location>
        <begin position="230"/>
        <end position="240"/>
    </location>
</feature>
<feature type="helix" evidence="18">
    <location>
        <begin position="244"/>
        <end position="246"/>
    </location>
</feature>
<feature type="helix" evidence="18">
    <location>
        <begin position="251"/>
        <end position="260"/>
    </location>
</feature>
<feature type="strand" evidence="18">
    <location>
        <begin position="262"/>
        <end position="265"/>
    </location>
</feature>
<feature type="strand" evidence="18">
    <location>
        <begin position="272"/>
        <end position="274"/>
    </location>
</feature>
<feature type="strand" evidence="18">
    <location>
        <begin position="282"/>
        <end position="295"/>
    </location>
</feature>
<feature type="turn" evidence="18">
    <location>
        <begin position="296"/>
        <end position="298"/>
    </location>
</feature>
<feature type="strand" evidence="18">
    <location>
        <begin position="299"/>
        <end position="305"/>
    </location>
</feature>
<feature type="helix" evidence="18">
    <location>
        <begin position="312"/>
        <end position="317"/>
    </location>
</feature>
<feature type="strand" evidence="18">
    <location>
        <begin position="322"/>
        <end position="327"/>
    </location>
</feature>
<feature type="strand" evidence="18">
    <location>
        <begin position="329"/>
        <end position="331"/>
    </location>
</feature>
<feature type="strand" evidence="18">
    <location>
        <begin position="333"/>
        <end position="338"/>
    </location>
</feature>
<feature type="helix" evidence="18">
    <location>
        <begin position="339"/>
        <end position="346"/>
    </location>
</feature>
<dbReference type="EMBL" id="U78168">
    <property type="protein sequence ID" value="AAD12740.1"/>
    <property type="status" value="ALT_INIT"/>
    <property type="molecule type" value="mRNA"/>
</dbReference>
<dbReference type="EMBL" id="U78169">
    <property type="protein sequence ID" value="AAD02890.1"/>
    <property type="status" value="ALT_INIT"/>
    <property type="molecule type" value="mRNA"/>
</dbReference>
<dbReference type="EMBL" id="AK290230">
    <property type="protein sequence ID" value="BAF82919.1"/>
    <property type="molecule type" value="mRNA"/>
</dbReference>
<dbReference type="EMBL" id="AC004241">
    <property type="status" value="NOT_ANNOTATED_CDS"/>
    <property type="molecule type" value="Genomic_DNA"/>
</dbReference>
<dbReference type="EMBL" id="AC137054">
    <property type="status" value="NOT_ANNOTATED_CDS"/>
    <property type="molecule type" value="Genomic_DNA"/>
</dbReference>
<dbReference type="EMBL" id="CH471111">
    <property type="protein sequence ID" value="EAW57944.1"/>
    <property type="molecule type" value="Genomic_DNA"/>
</dbReference>
<dbReference type="EMBL" id="BC017728">
    <property type="protein sequence ID" value="AAH17728.2"/>
    <property type="molecule type" value="mRNA"/>
</dbReference>
<dbReference type="EMBL" id="AF103905">
    <property type="protein sequence ID" value="AAC83381.1"/>
    <property type="molecule type" value="mRNA"/>
</dbReference>
<dbReference type="CCDS" id="CCDS31784.1">
    <molecule id="O95398-3"/>
</dbReference>
<dbReference type="CCDS" id="CCDS41775.1">
    <molecule id="O95398-1"/>
</dbReference>
<dbReference type="RefSeq" id="NP_001092001.2">
    <molecule id="O95398-1"/>
    <property type="nucleotide sequence ID" value="NM_001098531.4"/>
</dbReference>
<dbReference type="RefSeq" id="NP_001092002.1">
    <property type="nucleotide sequence ID" value="NM_001098532.2"/>
</dbReference>
<dbReference type="RefSeq" id="NP_006096.2">
    <property type="nucleotide sequence ID" value="NM_006105.5"/>
</dbReference>
<dbReference type="PDB" id="6H7E">
    <property type="method" value="X-ray"/>
    <property type="resolution" value="2.30 A"/>
    <property type="chains" value="A/B=92-360"/>
</dbReference>
<dbReference type="PDBsum" id="6H7E"/>
<dbReference type="SASBDB" id="O95398"/>
<dbReference type="SMR" id="O95398"/>
<dbReference type="BioGRID" id="115682">
    <property type="interactions" value="20"/>
</dbReference>
<dbReference type="FunCoup" id="O95398">
    <property type="interactions" value="699"/>
</dbReference>
<dbReference type="IntAct" id="O95398">
    <property type="interactions" value="5"/>
</dbReference>
<dbReference type="MINT" id="O95398"/>
<dbReference type="STRING" id="9606.ENSP00000395708"/>
<dbReference type="BindingDB" id="O95398"/>
<dbReference type="ChEMBL" id="CHEMBL2029197"/>
<dbReference type="GuidetoPHARMACOLOGY" id="1292"/>
<dbReference type="GlyGen" id="O95398">
    <property type="glycosylation" value="3 sites, 1 O-linked glycan (1 site)"/>
</dbReference>
<dbReference type="iPTMnet" id="O95398"/>
<dbReference type="PhosphoSitePlus" id="O95398"/>
<dbReference type="BioMuta" id="RAPGEF3"/>
<dbReference type="MassIVE" id="O95398"/>
<dbReference type="PaxDb" id="9606-ENSP00000395708"/>
<dbReference type="PeptideAtlas" id="O95398"/>
<dbReference type="ProteomicsDB" id="17545"/>
<dbReference type="ProteomicsDB" id="50849">
    <molecule id="O95398-1"/>
</dbReference>
<dbReference type="ProteomicsDB" id="50850">
    <molecule id="O95398-2"/>
</dbReference>
<dbReference type="Antibodypedia" id="3824">
    <property type="antibodies" value="276 antibodies from 38 providers"/>
</dbReference>
<dbReference type="DNASU" id="10411"/>
<dbReference type="Ensembl" id="ENST00000389212.7">
    <molecule id="O95398-1"/>
    <property type="protein sequence ID" value="ENSP00000373864.3"/>
    <property type="gene ID" value="ENSG00000079337.16"/>
</dbReference>
<dbReference type="Ensembl" id="ENST00000395358.7">
    <molecule id="O95398-2"/>
    <property type="protein sequence ID" value="ENSP00000378764.3"/>
    <property type="gene ID" value="ENSG00000079337.16"/>
</dbReference>
<dbReference type="Ensembl" id="ENST00000405493.6">
    <molecule id="O95398-3"/>
    <property type="protein sequence ID" value="ENSP00000384521.2"/>
    <property type="gene ID" value="ENSG00000079337.16"/>
</dbReference>
<dbReference type="Ensembl" id="ENST00000449771.7">
    <molecule id="O95398-1"/>
    <property type="protein sequence ID" value="ENSP00000395708.2"/>
    <property type="gene ID" value="ENSG00000079337.16"/>
</dbReference>
<dbReference type="Ensembl" id="ENST00000549151.5">
    <molecule id="O95398-3"/>
    <property type="protein sequence ID" value="ENSP00000448619.1"/>
    <property type="gene ID" value="ENSG00000079337.16"/>
</dbReference>
<dbReference type="GeneID" id="10411"/>
<dbReference type="KEGG" id="hsa:10411"/>
<dbReference type="MANE-Select" id="ENST00000449771.7">
    <property type="protein sequence ID" value="ENSP00000395708.2"/>
    <property type="RefSeq nucleotide sequence ID" value="NM_001098531.4"/>
    <property type="RefSeq protein sequence ID" value="NP_001092001.2"/>
</dbReference>
<dbReference type="UCSC" id="uc001rpz.5">
    <molecule id="O95398-1"/>
    <property type="organism name" value="human"/>
</dbReference>
<dbReference type="AGR" id="HGNC:16629"/>
<dbReference type="CTD" id="10411"/>
<dbReference type="DisGeNET" id="10411"/>
<dbReference type="GeneCards" id="RAPGEF3"/>
<dbReference type="HGNC" id="HGNC:16629">
    <property type="gene designation" value="RAPGEF3"/>
</dbReference>
<dbReference type="HPA" id="ENSG00000079337">
    <property type="expression patterns" value="Low tissue specificity"/>
</dbReference>
<dbReference type="MIM" id="606057">
    <property type="type" value="gene"/>
</dbReference>
<dbReference type="neXtProt" id="NX_O95398"/>
<dbReference type="OpenTargets" id="ENSG00000079337"/>
<dbReference type="PharmGKB" id="PA134910959"/>
<dbReference type="VEuPathDB" id="HostDB:ENSG00000079337"/>
<dbReference type="eggNOG" id="KOG2378">
    <property type="taxonomic scope" value="Eukaryota"/>
</dbReference>
<dbReference type="GeneTree" id="ENSGT00940000159931"/>
<dbReference type="HOGENOM" id="CLU_006829_0_0_1"/>
<dbReference type="InParanoid" id="O95398"/>
<dbReference type="OMA" id="EKQTIRG"/>
<dbReference type="OrthoDB" id="21144at2759"/>
<dbReference type="PAN-GO" id="O95398">
    <property type="GO annotations" value="3 GO annotations based on evolutionary models"/>
</dbReference>
<dbReference type="PhylomeDB" id="O95398"/>
<dbReference type="TreeFam" id="TF313184"/>
<dbReference type="PathwayCommons" id="O95398"/>
<dbReference type="Reactome" id="R-HSA-354192">
    <property type="pathway name" value="Integrin signaling"/>
</dbReference>
<dbReference type="Reactome" id="R-HSA-381676">
    <property type="pathway name" value="Glucagon-like Peptide-1 (GLP1) regulates insulin secretion"/>
</dbReference>
<dbReference type="Reactome" id="R-HSA-392517">
    <property type="pathway name" value="Rap1 signalling"/>
</dbReference>
<dbReference type="Reactome" id="R-HSA-422356">
    <property type="pathway name" value="Regulation of insulin secretion"/>
</dbReference>
<dbReference type="SignaLink" id="O95398"/>
<dbReference type="SIGNOR" id="O95398"/>
<dbReference type="BioGRID-ORCS" id="10411">
    <property type="hits" value="15 hits in 1149 CRISPR screens"/>
</dbReference>
<dbReference type="ChiTaRS" id="RAPGEF3">
    <property type="organism name" value="human"/>
</dbReference>
<dbReference type="GeneWiki" id="RAPGEF3"/>
<dbReference type="GenomeRNAi" id="10411"/>
<dbReference type="Pharos" id="O95398">
    <property type="development level" value="Tchem"/>
</dbReference>
<dbReference type="PRO" id="PR:O95398"/>
<dbReference type="Proteomes" id="UP000005640">
    <property type="component" value="Chromosome 12"/>
</dbReference>
<dbReference type="RNAct" id="O95398">
    <property type="molecule type" value="protein"/>
</dbReference>
<dbReference type="Bgee" id="ENSG00000079337">
    <property type="expression patterns" value="Expressed in metanephros cortex and 175 other cell types or tissues"/>
</dbReference>
<dbReference type="ExpressionAtlas" id="O95398">
    <property type="expression patterns" value="baseline and differential"/>
</dbReference>
<dbReference type="GO" id="GO:0012505">
    <property type="term" value="C:endomembrane system"/>
    <property type="evidence" value="ECO:0007669"/>
    <property type="project" value="UniProtKB-SubCell"/>
</dbReference>
<dbReference type="GO" id="GO:0070062">
    <property type="term" value="C:extracellular exosome"/>
    <property type="evidence" value="ECO:0007005"/>
    <property type="project" value="UniProtKB"/>
</dbReference>
<dbReference type="GO" id="GO:0030175">
    <property type="term" value="C:filopodium"/>
    <property type="evidence" value="ECO:0000314"/>
    <property type="project" value="UniProtKB"/>
</dbReference>
<dbReference type="GO" id="GO:0030027">
    <property type="term" value="C:lamellipodium"/>
    <property type="evidence" value="ECO:0000314"/>
    <property type="project" value="UniProtKB"/>
</dbReference>
<dbReference type="GO" id="GO:0016020">
    <property type="term" value="C:membrane"/>
    <property type="evidence" value="ECO:0000304"/>
    <property type="project" value="ProtInc"/>
</dbReference>
<dbReference type="GO" id="GO:0005902">
    <property type="term" value="C:microvillus"/>
    <property type="evidence" value="ECO:0000314"/>
    <property type="project" value="UniProtKB"/>
</dbReference>
<dbReference type="GO" id="GO:0005886">
    <property type="term" value="C:plasma membrane"/>
    <property type="evidence" value="ECO:0000304"/>
    <property type="project" value="Reactome"/>
</dbReference>
<dbReference type="GO" id="GO:0030552">
    <property type="term" value="F:cAMP binding"/>
    <property type="evidence" value="ECO:0000304"/>
    <property type="project" value="Reactome"/>
</dbReference>
<dbReference type="GO" id="GO:0005085">
    <property type="term" value="F:guanyl-nucleotide exchange factor activity"/>
    <property type="evidence" value="ECO:0000315"/>
    <property type="project" value="UniProtKB"/>
</dbReference>
<dbReference type="GO" id="GO:0019904">
    <property type="term" value="F:protein domain specific binding"/>
    <property type="evidence" value="ECO:0000353"/>
    <property type="project" value="UniProtKB"/>
</dbReference>
<dbReference type="GO" id="GO:0002250">
    <property type="term" value="P:adaptive immune response"/>
    <property type="evidence" value="ECO:0000304"/>
    <property type="project" value="Reactome"/>
</dbReference>
<dbReference type="GO" id="GO:0007189">
    <property type="term" value="P:adenylate cyclase-activating G protein-coupled receptor signaling pathway"/>
    <property type="evidence" value="ECO:0000303"/>
    <property type="project" value="BHF-UCL"/>
</dbReference>
<dbReference type="GO" id="GO:0001525">
    <property type="term" value="P:angiogenesis"/>
    <property type="evidence" value="ECO:0007669"/>
    <property type="project" value="UniProtKB-KW"/>
</dbReference>
<dbReference type="GO" id="GO:0008306">
    <property type="term" value="P:associative learning"/>
    <property type="evidence" value="ECO:0007669"/>
    <property type="project" value="Ensembl"/>
</dbReference>
<dbReference type="GO" id="GO:0071320">
    <property type="term" value="P:cellular response to cAMP"/>
    <property type="evidence" value="ECO:0000314"/>
    <property type="project" value="UniProtKB"/>
</dbReference>
<dbReference type="GO" id="GO:0061028">
    <property type="term" value="P:establishment of endothelial barrier"/>
    <property type="evidence" value="ECO:0000315"/>
    <property type="project" value="UniProtKB"/>
</dbReference>
<dbReference type="GO" id="GO:0035556">
    <property type="term" value="P:intracellular signal transduction"/>
    <property type="evidence" value="ECO:0000315"/>
    <property type="project" value="UniProtKB"/>
</dbReference>
<dbReference type="GO" id="GO:0034242">
    <property type="term" value="P:negative regulation of syncytium formation by plasma membrane fusion"/>
    <property type="evidence" value="ECO:0000315"/>
    <property type="project" value="UniProtKB"/>
</dbReference>
<dbReference type="GO" id="GO:0045766">
    <property type="term" value="P:positive regulation of angiogenesis"/>
    <property type="evidence" value="ECO:0000315"/>
    <property type="project" value="UniProtKB"/>
</dbReference>
<dbReference type="GO" id="GO:0043547">
    <property type="term" value="P:positive regulation of GTPase activity"/>
    <property type="evidence" value="ECO:0000315"/>
    <property type="project" value="UniProtKB"/>
</dbReference>
<dbReference type="GO" id="GO:0046827">
    <property type="term" value="P:positive regulation of protein export from nucleus"/>
    <property type="evidence" value="ECO:0000314"/>
    <property type="project" value="UniProtKB"/>
</dbReference>
<dbReference type="GO" id="GO:0051496">
    <property type="term" value="P:positive regulation of stress fiber assembly"/>
    <property type="evidence" value="ECO:0000315"/>
    <property type="project" value="UniProtKB"/>
</dbReference>
<dbReference type="GO" id="GO:0060143">
    <property type="term" value="P:positive regulation of syncytium formation by plasma membrane fusion"/>
    <property type="evidence" value="ECO:0000315"/>
    <property type="project" value="UniProtKB"/>
</dbReference>
<dbReference type="GO" id="GO:0032486">
    <property type="term" value="P:Rap protein signal transduction"/>
    <property type="evidence" value="ECO:0000315"/>
    <property type="project" value="UniProtKB"/>
</dbReference>
<dbReference type="GO" id="GO:0007265">
    <property type="term" value="P:Ras protein signal transduction"/>
    <property type="evidence" value="ECO:0000318"/>
    <property type="project" value="GO_Central"/>
</dbReference>
<dbReference type="GO" id="GO:0032956">
    <property type="term" value="P:regulation of actin cytoskeleton organization"/>
    <property type="evidence" value="ECO:0000315"/>
    <property type="project" value="UniProtKB"/>
</dbReference>
<dbReference type="GO" id="GO:0045765">
    <property type="term" value="P:regulation of angiogenesis"/>
    <property type="evidence" value="ECO:0000315"/>
    <property type="project" value="UniProt"/>
</dbReference>
<dbReference type="GO" id="GO:0050796">
    <property type="term" value="P:regulation of insulin secretion"/>
    <property type="evidence" value="ECO:0000304"/>
    <property type="project" value="Reactome"/>
</dbReference>
<dbReference type="GO" id="GO:0051896">
    <property type="term" value="P:regulation of phosphatidylinositol 3-kinase/protein kinase B signal transduction"/>
    <property type="evidence" value="ECO:0000315"/>
    <property type="project" value="UniProt"/>
</dbReference>
<dbReference type="GO" id="GO:0007165">
    <property type="term" value="P:signal transduction"/>
    <property type="evidence" value="ECO:0000304"/>
    <property type="project" value="ProtInc"/>
</dbReference>
<dbReference type="CDD" id="cd00038">
    <property type="entry name" value="CAP_ED"/>
    <property type="match status" value="1"/>
</dbReference>
<dbReference type="CDD" id="cd04437">
    <property type="entry name" value="DEP_Epac"/>
    <property type="match status" value="1"/>
</dbReference>
<dbReference type="CDD" id="cd00155">
    <property type="entry name" value="RasGEF"/>
    <property type="match status" value="1"/>
</dbReference>
<dbReference type="CDD" id="cd06224">
    <property type="entry name" value="REM"/>
    <property type="match status" value="1"/>
</dbReference>
<dbReference type="FunFam" id="3.10.20.90:FF:000192">
    <property type="entry name" value="Rap guanine nucleotide exchange factor (GEF) 3"/>
    <property type="match status" value="1"/>
</dbReference>
<dbReference type="FunFam" id="1.10.8.1240:FF:000001">
    <property type="entry name" value="Rap guanine nucleotide exchange factor (GEF) 4"/>
    <property type="match status" value="1"/>
</dbReference>
<dbReference type="FunFam" id="1.20.870.10:FF:000015">
    <property type="entry name" value="Rap guanine nucleotide exchange factor 3"/>
    <property type="match status" value="1"/>
</dbReference>
<dbReference type="FunFam" id="1.10.840.10:FF:000002">
    <property type="entry name" value="Rap guanine nucleotide exchange factor 4"/>
    <property type="match status" value="1"/>
</dbReference>
<dbReference type="FunFam" id="2.60.120.10:FF:000015">
    <property type="entry name" value="Rap guanine nucleotide exchange factor 4"/>
    <property type="match status" value="1"/>
</dbReference>
<dbReference type="Gene3D" id="1.10.8.1240">
    <property type="match status" value="1"/>
</dbReference>
<dbReference type="Gene3D" id="2.60.120.10">
    <property type="entry name" value="Jelly Rolls"/>
    <property type="match status" value="1"/>
</dbReference>
<dbReference type="Gene3D" id="3.10.20.90">
    <property type="entry name" value="Phosphatidylinositol 3-kinase Catalytic Subunit, Chain A, domain 1"/>
    <property type="match status" value="1"/>
</dbReference>
<dbReference type="Gene3D" id="1.10.840.10">
    <property type="entry name" value="Ras guanine-nucleotide exchange factors catalytic domain"/>
    <property type="match status" value="1"/>
</dbReference>
<dbReference type="Gene3D" id="1.20.870.10">
    <property type="entry name" value="Son of sevenless (SoS) protein Chain: S domain 1"/>
    <property type="match status" value="1"/>
</dbReference>
<dbReference type="Gene3D" id="1.10.10.10">
    <property type="entry name" value="Winged helix-like DNA-binding domain superfamily/Winged helix DNA-binding domain"/>
    <property type="match status" value="1"/>
</dbReference>
<dbReference type="InterPro" id="IPR000595">
    <property type="entry name" value="cNMP-bd_dom"/>
</dbReference>
<dbReference type="InterPro" id="IPR018490">
    <property type="entry name" value="cNMP-bd_dom_sf"/>
</dbReference>
<dbReference type="InterPro" id="IPR000591">
    <property type="entry name" value="DEP_dom"/>
</dbReference>
<dbReference type="InterPro" id="IPR008937">
    <property type="entry name" value="Ras-like_GEF"/>
</dbReference>
<dbReference type="InterPro" id="IPR000651">
    <property type="entry name" value="Ras-like_Gua-exchang_fac_N"/>
</dbReference>
<dbReference type="InterPro" id="IPR019804">
    <property type="entry name" value="Ras_G-nucl-exch_fac_CS"/>
</dbReference>
<dbReference type="InterPro" id="IPR023578">
    <property type="entry name" value="Ras_GEF_dom_sf"/>
</dbReference>
<dbReference type="InterPro" id="IPR001895">
    <property type="entry name" value="RASGEF_cat_dom"/>
</dbReference>
<dbReference type="InterPro" id="IPR036964">
    <property type="entry name" value="RASGEF_cat_dom_sf"/>
</dbReference>
<dbReference type="InterPro" id="IPR014710">
    <property type="entry name" value="RmlC-like_jellyroll"/>
</dbReference>
<dbReference type="InterPro" id="IPR029071">
    <property type="entry name" value="Ubiquitin-like_domsf"/>
</dbReference>
<dbReference type="InterPro" id="IPR036388">
    <property type="entry name" value="WH-like_DNA-bd_sf"/>
</dbReference>
<dbReference type="InterPro" id="IPR036390">
    <property type="entry name" value="WH_DNA-bd_sf"/>
</dbReference>
<dbReference type="PANTHER" id="PTHR23113">
    <property type="entry name" value="GUANINE NUCLEOTIDE EXCHANGE FACTOR"/>
    <property type="match status" value="1"/>
</dbReference>
<dbReference type="PANTHER" id="PTHR23113:SF24">
    <property type="entry name" value="RAP GUANINE NUCLEOTIDE EXCHANGE FACTOR 3"/>
    <property type="match status" value="1"/>
</dbReference>
<dbReference type="Pfam" id="PF00027">
    <property type="entry name" value="cNMP_binding"/>
    <property type="match status" value="1"/>
</dbReference>
<dbReference type="Pfam" id="PF00610">
    <property type="entry name" value="DEP"/>
    <property type="match status" value="1"/>
</dbReference>
<dbReference type="Pfam" id="PF00617">
    <property type="entry name" value="RasGEF"/>
    <property type="match status" value="1"/>
</dbReference>
<dbReference type="Pfam" id="PF00618">
    <property type="entry name" value="RasGEF_N"/>
    <property type="match status" value="1"/>
</dbReference>
<dbReference type="PRINTS" id="PR00103">
    <property type="entry name" value="CAMPKINASE"/>
</dbReference>
<dbReference type="SMART" id="SM00100">
    <property type="entry name" value="cNMP"/>
    <property type="match status" value="1"/>
</dbReference>
<dbReference type="SMART" id="SM00049">
    <property type="entry name" value="DEP"/>
    <property type="match status" value="1"/>
</dbReference>
<dbReference type="SMART" id="SM00147">
    <property type="entry name" value="RasGEF"/>
    <property type="match status" value="1"/>
</dbReference>
<dbReference type="SMART" id="SM00229">
    <property type="entry name" value="RasGEFN"/>
    <property type="match status" value="1"/>
</dbReference>
<dbReference type="SUPFAM" id="SSF51206">
    <property type="entry name" value="cAMP-binding domain-like"/>
    <property type="match status" value="1"/>
</dbReference>
<dbReference type="SUPFAM" id="SSF48366">
    <property type="entry name" value="Ras GEF"/>
    <property type="match status" value="1"/>
</dbReference>
<dbReference type="SUPFAM" id="SSF54236">
    <property type="entry name" value="Ubiquitin-like"/>
    <property type="match status" value="1"/>
</dbReference>
<dbReference type="SUPFAM" id="SSF46785">
    <property type="entry name" value="Winged helix' DNA-binding domain"/>
    <property type="match status" value="1"/>
</dbReference>
<dbReference type="PROSITE" id="PS50042">
    <property type="entry name" value="CNMP_BINDING_3"/>
    <property type="match status" value="1"/>
</dbReference>
<dbReference type="PROSITE" id="PS50186">
    <property type="entry name" value="DEP"/>
    <property type="match status" value="1"/>
</dbReference>
<dbReference type="PROSITE" id="PS00720">
    <property type="entry name" value="RASGEF"/>
    <property type="match status" value="1"/>
</dbReference>
<dbReference type="PROSITE" id="PS50009">
    <property type="entry name" value="RASGEF_CAT"/>
    <property type="match status" value="1"/>
</dbReference>
<dbReference type="PROSITE" id="PS50212">
    <property type="entry name" value="RASGEF_NTER"/>
    <property type="match status" value="1"/>
</dbReference>
<keyword id="KW-0002">3D-structure</keyword>
<keyword id="KW-0025">Alternative splicing</keyword>
<keyword id="KW-0037">Angiogenesis</keyword>
<keyword id="KW-0114">cAMP</keyword>
<keyword id="KW-0116">cAMP-binding</keyword>
<keyword id="KW-0344">Guanine-nucleotide releasing factor</keyword>
<keyword id="KW-0472">Membrane</keyword>
<keyword id="KW-0547">Nucleotide-binding</keyword>
<keyword id="KW-0597">Phosphoprotein</keyword>
<keyword id="KW-1267">Proteomics identification</keyword>
<keyword id="KW-1185">Reference proteome</keyword>